<evidence type="ECO:0000250" key="1">
    <source>
        <dbReference type="UniProtKB" id="Q8NHP7"/>
    </source>
</evidence>
<evidence type="ECO:0000255" key="2"/>
<evidence type="ECO:0000269" key="3">
    <source>
    </source>
</evidence>
<evidence type="ECO:0000303" key="4">
    <source>
    </source>
</evidence>
<evidence type="ECO:0000305" key="5"/>
<evidence type="ECO:0000305" key="6">
    <source>
    </source>
</evidence>
<evidence type="ECO:0007829" key="7">
    <source>
        <dbReference type="PDB" id="5FIS"/>
    </source>
</evidence>
<reference key="1">
    <citation type="journal article" date="2008" name="Insect Biochem. Mol. Biol.">
        <title>The genome of a lepidopteran model insect, the silkworm Bombyx mori.</title>
        <authorList>
            <consortium name="International Silkworm Genome Consortium"/>
        </authorList>
    </citation>
    <scope>NUCLEOTIDE SEQUENCE [LARGE SCALE GENOMIC DNA]</scope>
    <source>
        <strain>p50T</strain>
    </source>
</reference>
<reference key="2">
    <citation type="journal article" date="2016" name="Mol. Cell">
        <title>PIWI slicing and EXD1 drive biogenesis of nuclear piRNAs from cytosolic targets of the mouse piRNA pathway.</title>
        <authorList>
            <person name="Yang Z."/>
            <person name="Chen K.M."/>
            <person name="Pandey R.R."/>
            <person name="Homolka D."/>
            <person name="Reuter M."/>
            <person name="Janeiro B.K."/>
            <person name="Sachidanandam R."/>
            <person name="Fauvarque M.O."/>
            <person name="McCarthy A.A."/>
            <person name="Pillai R.S."/>
        </authorList>
    </citation>
    <scope>X-RAY CRYSTALLOGRAPHY (1.6 ANGSTROMS) OF 73-315</scope>
    <scope>FUNCTION</scope>
    <scope>SUBCELLULAR LOCATION</scope>
    <scope>SUBUNIT</scope>
    <scope>IDENTIFICATION IN THE PET COMPLEX</scope>
    <scope>DOMAIN</scope>
</reference>
<name>EXD1_BOMMO</name>
<keyword id="KW-0002">3D-structure</keyword>
<keyword id="KW-0963">Cytoplasm</keyword>
<keyword id="KW-0469">Meiosis</keyword>
<keyword id="KW-1185">Reference proteome</keyword>
<keyword id="KW-0694">RNA-binding</keyword>
<keyword id="KW-0943">RNA-mediated gene silencing</keyword>
<sequence>MDNLYTKGELLQVHTKNYDVFEGRFYSMAQDKTKISLYDVKEIPHGDANDGVLHYYDSEIREVVKLQESTEKKVLKISQTKYEEILKISKKYIFINQVDKSFHEAVDDLNQQDFIAVSGDGANMGRKCKMPFLVLSTDHQIYIFDIQVMQYHAFESGLKKILEGDSPKKIAHDCRKLSDCLYHKHNVKLKSVFDTQVGDLIITKNKKVTLPNKVKSLGECLTNYLGLQQNTIDEKLDIVQSTERPLSVKIKDSLARNIAFLHHLSEVINEEMQLPFYRGVECYIENIRSSDDFKAWELCGKLNQIPKEFRNAIDY</sequence>
<dbReference type="EMBL" id="BABH01000658">
    <property type="status" value="NOT_ANNOTATED_CDS"/>
    <property type="molecule type" value="Genomic_DNA"/>
</dbReference>
<dbReference type="PDB" id="5FIQ">
    <property type="method" value="X-ray"/>
    <property type="resolution" value="2.40 A"/>
    <property type="chains" value="A/C/E/G/I=73-315"/>
</dbReference>
<dbReference type="PDB" id="5FIS">
    <property type="method" value="X-ray"/>
    <property type="resolution" value="1.60 A"/>
    <property type="chains" value="A/B=73-315"/>
</dbReference>
<dbReference type="PDBsum" id="5FIQ"/>
<dbReference type="PDBsum" id="5FIS"/>
<dbReference type="SMR" id="H9IUR0"/>
<dbReference type="FunCoup" id="H9IUR0">
    <property type="interactions" value="3"/>
</dbReference>
<dbReference type="STRING" id="7091.H9IUR0"/>
<dbReference type="PaxDb" id="7091-BGIBMGA000990-TA"/>
<dbReference type="eggNOG" id="KOG2405">
    <property type="taxonomic scope" value="Eukaryota"/>
</dbReference>
<dbReference type="HOGENOM" id="CLU_960502_0_0_1"/>
<dbReference type="InParanoid" id="H9IUR0"/>
<dbReference type="EvolutionaryTrace" id="H9IUR0"/>
<dbReference type="Proteomes" id="UP000005204">
    <property type="component" value="Unassembled WGS sequence"/>
</dbReference>
<dbReference type="GO" id="GO:0043186">
    <property type="term" value="C:P granule"/>
    <property type="evidence" value="ECO:0000314"/>
    <property type="project" value="UniProtKB"/>
</dbReference>
<dbReference type="GO" id="GO:1990923">
    <property type="term" value="C:PET complex"/>
    <property type="evidence" value="ECO:0000314"/>
    <property type="project" value="UniProtKB"/>
</dbReference>
<dbReference type="GO" id="GO:0042803">
    <property type="term" value="F:protein homodimerization activity"/>
    <property type="evidence" value="ECO:0000314"/>
    <property type="project" value="UniProtKB"/>
</dbReference>
<dbReference type="GO" id="GO:0003723">
    <property type="term" value="F:RNA binding"/>
    <property type="evidence" value="ECO:0000314"/>
    <property type="project" value="UniProtKB"/>
</dbReference>
<dbReference type="GO" id="GO:0051321">
    <property type="term" value="P:meiotic cell cycle"/>
    <property type="evidence" value="ECO:0007669"/>
    <property type="project" value="UniProtKB-KW"/>
</dbReference>
<dbReference type="GO" id="GO:0034587">
    <property type="term" value="P:piRNA processing"/>
    <property type="evidence" value="ECO:0000315"/>
    <property type="project" value="UniProtKB"/>
</dbReference>
<dbReference type="GO" id="GO:0031047">
    <property type="term" value="P:regulatory ncRNA-mediated gene silencing"/>
    <property type="evidence" value="ECO:0000315"/>
    <property type="project" value="UniProtKB"/>
</dbReference>
<dbReference type="Gene3D" id="3.30.420.10">
    <property type="entry name" value="Ribonuclease H-like superfamily/Ribonuclease H"/>
    <property type="match status" value="1"/>
</dbReference>
<dbReference type="InterPro" id="IPR002562">
    <property type="entry name" value="3'-5'_exonuclease_dom"/>
</dbReference>
<dbReference type="InterPro" id="IPR052144">
    <property type="entry name" value="piRNA_biogenesis_EXD1"/>
</dbReference>
<dbReference type="InterPro" id="IPR012337">
    <property type="entry name" value="RNaseH-like_sf"/>
</dbReference>
<dbReference type="InterPro" id="IPR036397">
    <property type="entry name" value="RNaseH_sf"/>
</dbReference>
<dbReference type="PANTHER" id="PTHR46628">
    <property type="entry name" value="PIRNA BIOGENESIS PROTEIN EXD1"/>
    <property type="match status" value="1"/>
</dbReference>
<dbReference type="PANTHER" id="PTHR46628:SF1">
    <property type="entry name" value="PIRNA BIOGENESIS PROTEIN EXD1"/>
    <property type="match status" value="1"/>
</dbReference>
<dbReference type="Pfam" id="PF01612">
    <property type="entry name" value="DNA_pol_A_exo1"/>
    <property type="match status" value="1"/>
</dbReference>
<dbReference type="SUPFAM" id="SSF53098">
    <property type="entry name" value="Ribonuclease H-like"/>
    <property type="match status" value="1"/>
</dbReference>
<organism>
    <name type="scientific">Bombyx mori</name>
    <name type="common">Silk moth</name>
    <dbReference type="NCBI Taxonomy" id="7091"/>
    <lineage>
        <taxon>Eukaryota</taxon>
        <taxon>Metazoa</taxon>
        <taxon>Ecdysozoa</taxon>
        <taxon>Arthropoda</taxon>
        <taxon>Hexapoda</taxon>
        <taxon>Insecta</taxon>
        <taxon>Pterygota</taxon>
        <taxon>Neoptera</taxon>
        <taxon>Endopterygota</taxon>
        <taxon>Lepidoptera</taxon>
        <taxon>Glossata</taxon>
        <taxon>Ditrysia</taxon>
        <taxon>Bombycoidea</taxon>
        <taxon>Bombycidae</taxon>
        <taxon>Bombycinae</taxon>
        <taxon>Bombyx</taxon>
    </lineage>
</organism>
<comment type="function">
    <text evidence="3">RNA-binding component of the PET complex, a multiprotein complex required for the processing of piRNAs during spermatogenesis. The piRNA metabolic process mediates the repression of transposable elements during meiosis by forming complexes composed of piRNAs and Piwi proteins and governs the methylation and subsequent repression of transposable elements, preventing their mobilization, which is essential for the germline integrity. The PET complex is required during the secondary piRNAs metabolic process for the PIWIL2 slicing-triggered loading of PIWIL4 piRNAs. In the PET complex, EXD1 probably acts as an RNA adapter. EXD1 is an inactive exonuclease.</text>
</comment>
<comment type="subunit">
    <text evidence="3">Homodimer (PubMed:26669262). Component of the PET complex, at least composed of EXD1, SIWI, TDRD12 and piRNAs (PubMed:26669262).</text>
</comment>
<comment type="subcellular location">
    <subcellularLocation>
        <location evidence="3">Cytoplasm</location>
    </subcellularLocation>
    <text evidence="3">Component of the meiotic nuage, also named P granule, a germ-cell-specific organelle required to repress transposon activity during meiosis.</text>
</comment>
<comment type="domain">
    <text evidence="6">The 3'-5' exonuclease domain lacks the conserved Asp-Glu-Asp-Asp (DEDD) residues that coordinates divalent ions essential for exonuclease activity.</text>
</comment>
<comment type="similarity">
    <text evidence="5">Belongs to the EXD1 family.</text>
</comment>
<feature type="chain" id="PRO_0000435800" description="piRNA biogenesis protein EXD1">
    <location>
        <begin position="1"/>
        <end position="315"/>
    </location>
</feature>
<feature type="domain" description="3'-5' exonuclease" evidence="2">
    <location>
        <begin position="141"/>
        <end position="228"/>
    </location>
</feature>
<feature type="helix" evidence="7">
    <location>
        <begin position="79"/>
        <end position="90"/>
    </location>
</feature>
<feature type="strand" evidence="7">
    <location>
        <begin position="93"/>
        <end position="95"/>
    </location>
</feature>
<feature type="strand" evidence="7">
    <location>
        <begin position="97"/>
        <end position="99"/>
    </location>
</feature>
<feature type="helix" evidence="7">
    <location>
        <begin position="100"/>
        <end position="110"/>
    </location>
</feature>
<feature type="strand" evidence="7">
    <location>
        <begin position="113"/>
        <end position="117"/>
    </location>
</feature>
<feature type="helix" evidence="7">
    <location>
        <begin position="125"/>
        <end position="127"/>
    </location>
</feature>
<feature type="strand" evidence="7">
    <location>
        <begin position="133"/>
        <end position="136"/>
    </location>
</feature>
<feature type="strand" evidence="7">
    <location>
        <begin position="141"/>
        <end position="144"/>
    </location>
</feature>
<feature type="helix" evidence="7">
    <location>
        <begin position="146"/>
        <end position="149"/>
    </location>
</feature>
<feature type="helix" evidence="7">
    <location>
        <begin position="151"/>
        <end position="155"/>
    </location>
</feature>
<feature type="helix" evidence="7">
    <location>
        <begin position="158"/>
        <end position="163"/>
    </location>
</feature>
<feature type="strand" evidence="7">
    <location>
        <begin position="164"/>
        <end position="173"/>
    </location>
</feature>
<feature type="helix" evidence="7">
    <location>
        <begin position="175"/>
        <end position="185"/>
    </location>
</feature>
<feature type="strand" evidence="7">
    <location>
        <begin position="191"/>
        <end position="194"/>
    </location>
</feature>
<feature type="helix" evidence="7">
    <location>
        <begin position="195"/>
        <end position="207"/>
    </location>
</feature>
<feature type="helix" evidence="7">
    <location>
        <begin position="217"/>
        <end position="225"/>
    </location>
</feature>
<feature type="helix" evidence="7">
    <location>
        <begin position="238"/>
        <end position="242"/>
    </location>
</feature>
<feature type="strand" evidence="7">
    <location>
        <begin position="243"/>
        <end position="245"/>
    </location>
</feature>
<feature type="helix" evidence="7">
    <location>
        <begin position="248"/>
        <end position="259"/>
    </location>
</feature>
<feature type="helix" evidence="7">
    <location>
        <begin position="261"/>
        <end position="271"/>
    </location>
</feature>
<feature type="helix" evidence="7">
    <location>
        <begin position="274"/>
        <end position="288"/>
    </location>
</feature>
<feature type="helix" evidence="7">
    <location>
        <begin position="292"/>
        <end position="299"/>
    </location>
</feature>
<feature type="turn" evidence="7">
    <location>
        <begin position="300"/>
        <end position="303"/>
    </location>
</feature>
<feature type="helix" evidence="7">
    <location>
        <begin position="309"/>
        <end position="313"/>
    </location>
</feature>
<gene>
    <name evidence="4" type="primary">EXD1</name>
</gene>
<accession>H9IUR0</accession>
<proteinExistence type="evidence at protein level"/>
<protein>
    <recommendedName>
        <fullName evidence="5">piRNA biogenesis protein EXD1</fullName>
    </recommendedName>
    <alternativeName>
        <fullName evidence="1">Exonuclease 3'-5' domain-containing protein 1</fullName>
    </alternativeName>
    <alternativeName>
        <fullName evidence="1">Exonuclease 3'-5' domain-like-containing protein 1</fullName>
    </alternativeName>
    <alternativeName>
        <fullName evidence="5">Inactive exonuclease EXD1</fullName>
        <shortName evidence="4">BmExd1</shortName>
    </alternativeName>
</protein>